<evidence type="ECO:0000255" key="1"/>
<evidence type="ECO:0000269" key="2">
    <source>
    </source>
</evidence>
<evidence type="ECO:0000305" key="3"/>
<reference key="1">
    <citation type="journal article" date="2002" name="Mamm. Genome">
        <title>Genomic characterization of the human prion protein (PrP) gene locus.</title>
        <authorList>
            <person name="Makrinou E."/>
            <person name="Collinge J."/>
            <person name="Antoniou M."/>
        </authorList>
    </citation>
    <scope>NUCLEOTIDE SEQUENCE [MRNA]</scope>
    <scope>TISSUE SPECIFICITY</scope>
    <source>
        <tissue>Testis</tissue>
    </source>
</reference>
<reference key="2">
    <citation type="journal article" date="2001" name="Nature">
        <title>The DNA sequence and comparative analysis of human chromosome 20.</title>
        <authorList>
            <person name="Deloukas P."/>
            <person name="Matthews L.H."/>
            <person name="Ashurst J.L."/>
            <person name="Burton J."/>
            <person name="Gilbert J.G.R."/>
            <person name="Jones M."/>
            <person name="Stavrides G."/>
            <person name="Almeida J.P."/>
            <person name="Babbage A.K."/>
            <person name="Bagguley C.L."/>
            <person name="Bailey J."/>
            <person name="Barlow K.F."/>
            <person name="Bates K.N."/>
            <person name="Beard L.M."/>
            <person name="Beare D.M."/>
            <person name="Beasley O.P."/>
            <person name="Bird C.P."/>
            <person name="Blakey S.E."/>
            <person name="Bridgeman A.M."/>
            <person name="Brown A.J."/>
            <person name="Buck D."/>
            <person name="Burrill W.D."/>
            <person name="Butler A.P."/>
            <person name="Carder C."/>
            <person name="Carter N.P."/>
            <person name="Chapman J.C."/>
            <person name="Clamp M."/>
            <person name="Clark G."/>
            <person name="Clark L.N."/>
            <person name="Clark S.Y."/>
            <person name="Clee C.M."/>
            <person name="Clegg S."/>
            <person name="Cobley V.E."/>
            <person name="Collier R.E."/>
            <person name="Connor R.E."/>
            <person name="Corby N.R."/>
            <person name="Coulson A."/>
            <person name="Coville G.J."/>
            <person name="Deadman R."/>
            <person name="Dhami P.D."/>
            <person name="Dunn M."/>
            <person name="Ellington A.G."/>
            <person name="Frankland J.A."/>
            <person name="Fraser A."/>
            <person name="French L."/>
            <person name="Garner P."/>
            <person name="Grafham D.V."/>
            <person name="Griffiths C."/>
            <person name="Griffiths M.N.D."/>
            <person name="Gwilliam R."/>
            <person name="Hall R.E."/>
            <person name="Hammond S."/>
            <person name="Harley J.L."/>
            <person name="Heath P.D."/>
            <person name="Ho S."/>
            <person name="Holden J.L."/>
            <person name="Howden P.J."/>
            <person name="Huckle E."/>
            <person name="Hunt A.R."/>
            <person name="Hunt S.E."/>
            <person name="Jekosch K."/>
            <person name="Johnson C.M."/>
            <person name="Johnson D."/>
            <person name="Kay M.P."/>
            <person name="Kimberley A.M."/>
            <person name="King A."/>
            <person name="Knights A."/>
            <person name="Laird G.K."/>
            <person name="Lawlor S."/>
            <person name="Lehvaeslaiho M.H."/>
            <person name="Leversha M.A."/>
            <person name="Lloyd C."/>
            <person name="Lloyd D.M."/>
            <person name="Lovell J.D."/>
            <person name="Marsh V.L."/>
            <person name="Martin S.L."/>
            <person name="McConnachie L.J."/>
            <person name="McLay K."/>
            <person name="McMurray A.A."/>
            <person name="Milne S.A."/>
            <person name="Mistry D."/>
            <person name="Moore M.J.F."/>
            <person name="Mullikin J.C."/>
            <person name="Nickerson T."/>
            <person name="Oliver K."/>
            <person name="Parker A."/>
            <person name="Patel R."/>
            <person name="Pearce T.A.V."/>
            <person name="Peck A.I."/>
            <person name="Phillimore B.J.C.T."/>
            <person name="Prathalingam S.R."/>
            <person name="Plumb R.W."/>
            <person name="Ramsay H."/>
            <person name="Rice C.M."/>
            <person name="Ross M.T."/>
            <person name="Scott C.E."/>
            <person name="Sehra H.K."/>
            <person name="Shownkeen R."/>
            <person name="Sims S."/>
            <person name="Skuce C.D."/>
            <person name="Smith M.L."/>
            <person name="Soderlund C."/>
            <person name="Steward C.A."/>
            <person name="Sulston J.E."/>
            <person name="Swann R.M."/>
            <person name="Sycamore N."/>
            <person name="Taylor R."/>
            <person name="Tee L."/>
            <person name="Thomas D.W."/>
            <person name="Thorpe A."/>
            <person name="Tracey A."/>
            <person name="Tromans A.C."/>
            <person name="Vaudin M."/>
            <person name="Wall M."/>
            <person name="Wallis J.M."/>
            <person name="Whitehead S.L."/>
            <person name="Whittaker P."/>
            <person name="Willey D.L."/>
            <person name="Williams L."/>
            <person name="Williams S.A."/>
            <person name="Wilming L."/>
            <person name="Wray P.W."/>
            <person name="Hubbard T."/>
            <person name="Durbin R.M."/>
            <person name="Bentley D.R."/>
            <person name="Beck S."/>
            <person name="Rogers J."/>
        </authorList>
    </citation>
    <scope>NUCLEOTIDE SEQUENCE [LARGE SCALE GENOMIC DNA]</scope>
</reference>
<reference key="3">
    <citation type="submission" date="2005-09" db="EMBL/GenBank/DDBJ databases">
        <authorList>
            <person name="Mural R.J."/>
            <person name="Istrail S."/>
            <person name="Sutton G.G."/>
            <person name="Florea L."/>
            <person name="Halpern A.L."/>
            <person name="Mobarry C.M."/>
            <person name="Lippert R."/>
            <person name="Walenz B."/>
            <person name="Shatkay H."/>
            <person name="Dew I."/>
            <person name="Miller J.R."/>
            <person name="Flanigan M.J."/>
            <person name="Edwards N.J."/>
            <person name="Bolanos R."/>
            <person name="Fasulo D."/>
            <person name="Halldorsson B.V."/>
            <person name="Hannenhalli S."/>
            <person name="Turner R."/>
            <person name="Yooseph S."/>
            <person name="Lu F."/>
            <person name="Nusskern D.R."/>
            <person name="Shue B.C."/>
            <person name="Zheng X.H."/>
            <person name="Zhong F."/>
            <person name="Delcher A.L."/>
            <person name="Huson D.H."/>
            <person name="Kravitz S.A."/>
            <person name="Mouchard L."/>
            <person name="Reinert K."/>
            <person name="Remington K.A."/>
            <person name="Clark A.G."/>
            <person name="Waterman M.S."/>
            <person name="Eichler E.E."/>
            <person name="Adams M.D."/>
            <person name="Hunkapiller M.W."/>
            <person name="Myers E.W."/>
            <person name="Venter J.C."/>
        </authorList>
    </citation>
    <scope>NUCLEOTIDE SEQUENCE [LARGE SCALE GENOMIC DNA]</scope>
</reference>
<reference key="4">
    <citation type="journal article" date="2006" name="Genomics">
        <title>Comparative genomic organization of the human and bovine PRNP locus.</title>
        <authorList>
            <person name="Choi S.-H."/>
            <person name="Kim I.-C."/>
            <person name="Kim D.-S."/>
            <person name="Kim D.-W."/>
            <person name="Chae S.-H."/>
            <person name="Choi H.-H."/>
            <person name="Choi I."/>
            <person name="Yeo J.-S."/>
            <person name="Song M.-N."/>
            <person name="Park H.-S."/>
        </authorList>
    </citation>
    <scope>PHYLOGENY</scope>
</reference>
<reference key="5">
    <citation type="journal article" date="2007" name="Biochim. Biophys. Acta">
        <title>The prion protein family: diversity, rivalry, and dysfunction.</title>
        <authorList>
            <person name="Watts J.C."/>
            <person name="Westaway D."/>
        </authorList>
    </citation>
    <scope>PHYLOGENY</scope>
</reference>
<reference key="6">
    <citation type="journal article" date="2007" name="BMC Genomics">
        <title>Comparative genomic analysis of prion genes.</title>
        <authorList>
            <person name="Premzl M."/>
            <person name="Gamulin V."/>
        </authorList>
    </citation>
    <scope>PHYLOGENY</scope>
</reference>
<sequence length="94" mass="10756">MQHSLVFFFAVILHLSHLLHLDASIHPFRLPFSSKPFLLIPMSNTTLPHTAWPLSFLHQTVSTLKAVAVTHSLWHLQIPVDCQACNRKSKKIYC</sequence>
<accession>Q86SH4</accession>
<accession>B2RPD9</accession>
<accession>B7ZBI9</accession>
<feature type="signal peptide" evidence="1">
    <location>
        <begin position="1"/>
        <end position="18"/>
    </location>
</feature>
<feature type="chain" id="PRO_0000320163" description="Putative testis-specific prion protein">
    <location>
        <begin position="19"/>
        <end position="94"/>
    </location>
</feature>
<feature type="glycosylation site" description="N-linked (GlcNAc...) asparagine" evidence="1">
    <location>
        <position position="44"/>
    </location>
</feature>
<feature type="sequence variant" id="VAR_039151" description="In dbSNP:rs7270737.">
    <original>T</original>
    <variation>S</variation>
    <location>
        <position position="50"/>
    </location>
</feature>
<keyword id="KW-0325">Glycoprotein</keyword>
<keyword id="KW-1185">Reference proteome</keyword>
<keyword id="KW-0964">Secreted</keyword>
<keyword id="KW-0732">Signal</keyword>
<name>PRNT_HUMAN</name>
<organism>
    <name type="scientific">Homo sapiens</name>
    <name type="common">Human</name>
    <dbReference type="NCBI Taxonomy" id="9606"/>
    <lineage>
        <taxon>Eukaryota</taxon>
        <taxon>Metazoa</taxon>
        <taxon>Chordata</taxon>
        <taxon>Craniata</taxon>
        <taxon>Vertebrata</taxon>
        <taxon>Euteleostomi</taxon>
        <taxon>Mammalia</taxon>
        <taxon>Eutheria</taxon>
        <taxon>Euarchontoglires</taxon>
        <taxon>Primates</taxon>
        <taxon>Haplorrhini</taxon>
        <taxon>Catarrhini</taxon>
        <taxon>Hominidae</taxon>
        <taxon>Homo</taxon>
    </lineage>
</organism>
<gene>
    <name type="primary">PRNT</name>
</gene>
<dbReference type="EMBL" id="AJ427539">
    <property type="protein sequence ID" value="CAD20690.1"/>
    <property type="molecule type" value="mRNA"/>
</dbReference>
<dbReference type="EMBL" id="AJ427540">
    <property type="protein sequence ID" value="CAD20691.1"/>
    <property type="molecule type" value="mRNA"/>
</dbReference>
<dbReference type="EMBL" id="AL133396">
    <property type="status" value="NOT_ANNOTATED_CDS"/>
    <property type="molecule type" value="Genomic_DNA"/>
</dbReference>
<dbReference type="EMBL" id="CH471133">
    <property type="protein sequence ID" value="EAX10447.1"/>
    <property type="molecule type" value="Genomic_DNA"/>
</dbReference>
<dbReference type="GlyCosmos" id="Q86SH4">
    <property type="glycosylation" value="1 site, No reported glycans"/>
</dbReference>
<dbReference type="GlyGen" id="Q86SH4">
    <property type="glycosylation" value="1 site"/>
</dbReference>
<dbReference type="BioMuta" id="PRNT"/>
<dbReference type="PaxDb" id="9606-ENSP00000321242"/>
<dbReference type="UCSC" id="uc002wlb.4">
    <property type="organism name" value="human"/>
</dbReference>
<dbReference type="AGR" id="HGNC:18046"/>
<dbReference type="GeneCards" id="PRNT"/>
<dbReference type="HGNC" id="HGNC:18046">
    <property type="gene designation" value="PRNT"/>
</dbReference>
<dbReference type="neXtProt" id="NX_Q86SH4"/>
<dbReference type="eggNOG" id="ENOG502TF9M">
    <property type="taxonomic scope" value="Eukaryota"/>
</dbReference>
<dbReference type="HOGENOM" id="CLU_2385552_0_0_1"/>
<dbReference type="InParanoid" id="Q86SH4"/>
<dbReference type="PAN-GO" id="Q86SH4">
    <property type="GO annotations" value="0 GO annotations based on evolutionary models"/>
</dbReference>
<dbReference type="PhylomeDB" id="Q86SH4"/>
<dbReference type="Pharos" id="Q86SH4">
    <property type="development level" value="Tdark"/>
</dbReference>
<dbReference type="Proteomes" id="UP000005640">
    <property type="component" value="Unplaced"/>
</dbReference>
<dbReference type="RNAct" id="Q86SH4">
    <property type="molecule type" value="protein"/>
</dbReference>
<dbReference type="GO" id="GO:0005576">
    <property type="term" value="C:extracellular region"/>
    <property type="evidence" value="ECO:0007669"/>
    <property type="project" value="UniProtKB-SubCell"/>
</dbReference>
<dbReference type="InterPro" id="IPR029172">
    <property type="entry name" value="PRNT"/>
</dbReference>
<dbReference type="Pfam" id="PF15174">
    <property type="entry name" value="PRNT"/>
    <property type="match status" value="1"/>
</dbReference>
<comment type="subcellular location">
    <subcellularLocation>
        <location evidence="3">Secreted</location>
    </subcellularLocation>
</comment>
<comment type="tissue specificity">
    <text evidence="2">Specifically expressed in adult testis.</text>
</comment>
<comment type="miscellaneous">
    <text>This putative protein is only present in primates and not in other mammals.</text>
</comment>
<comment type="caution">
    <text evidence="3">Could be the product of a pseudogene. According to PubMed:17562432, no evidence has been tendered concerning the existence of this protein.</text>
</comment>
<comment type="caution">
    <text evidence="3">According to PubMed:12514748, it is related to the prion family because it is found in the same genomic cluster as PRNP and PRND. However, it does not share any sequence similarity with these 2 proteins.</text>
</comment>
<proteinExistence type="uncertain"/>
<protein>
    <recommendedName>
        <fullName>Putative testis-specific prion protein</fullName>
    </recommendedName>
    <alternativeName>
        <fullName>Protein M8</fullName>
    </alternativeName>
</protein>